<evidence type="ECO:0000250" key="1"/>
<evidence type="ECO:0000305" key="2"/>
<evidence type="ECO:0000312" key="3">
    <source>
        <dbReference type="EMBL" id="AAG50365.1"/>
    </source>
</evidence>
<dbReference type="EMBL" id="AY013344">
    <property type="protein sequence ID" value="AAG50365.1"/>
    <property type="molecule type" value="Genomic_DNA"/>
</dbReference>
<dbReference type="SMR" id="Q9BM96"/>
<dbReference type="GO" id="GO:0005829">
    <property type="term" value="C:cytosol"/>
    <property type="evidence" value="ECO:0007669"/>
    <property type="project" value="TreeGrafter"/>
</dbReference>
<dbReference type="GO" id="GO:0101006">
    <property type="term" value="F:protein histidine phosphatase activity"/>
    <property type="evidence" value="ECO:0007669"/>
    <property type="project" value="TreeGrafter"/>
</dbReference>
<dbReference type="GO" id="GO:0030154">
    <property type="term" value="P:cell differentiation"/>
    <property type="evidence" value="ECO:0007669"/>
    <property type="project" value="UniProtKB-KW"/>
</dbReference>
<dbReference type="GO" id="GO:0007548">
    <property type="term" value="P:sex differentiation"/>
    <property type="evidence" value="ECO:0000250"/>
    <property type="project" value="UniProtKB"/>
</dbReference>
<dbReference type="FunFam" id="3.50.20.20:FF:000001">
    <property type="entry name" value="14 kDa phosphohistidine phosphatase"/>
    <property type="match status" value="1"/>
</dbReference>
<dbReference type="Gene3D" id="3.50.20.20">
    <property type="entry name" value="Janus/Ocnus"/>
    <property type="match status" value="1"/>
</dbReference>
<dbReference type="InterPro" id="IPR007702">
    <property type="entry name" value="Janus"/>
</dbReference>
<dbReference type="InterPro" id="IPR038596">
    <property type="entry name" value="Janus_sf"/>
</dbReference>
<dbReference type="PANTHER" id="PTHR12258:SF5">
    <property type="entry name" value="BCDNA.GH02250-RELATED"/>
    <property type="match status" value="1"/>
</dbReference>
<dbReference type="PANTHER" id="PTHR12258">
    <property type="entry name" value="JANUS-A/JANUS-B"/>
    <property type="match status" value="1"/>
</dbReference>
<dbReference type="Pfam" id="PF05005">
    <property type="entry name" value="Ocnus"/>
    <property type="match status" value="1"/>
</dbReference>
<dbReference type="SUPFAM" id="SSF143724">
    <property type="entry name" value="PHP14-like"/>
    <property type="match status" value="1"/>
</dbReference>
<reference evidence="2" key="1">
    <citation type="journal article" date="2001" name="Mol. Biol. Evol.">
        <title>Molecular evolution of the ocnus and janus genes in the Drosophila melanogaster species subgroup.</title>
        <authorList>
            <person name="Parsch J."/>
            <person name="Meiklejohn C.D."/>
            <person name="Hauschteck-Jungen E."/>
            <person name="Hunziker P."/>
            <person name="Hartl D.L."/>
        </authorList>
    </citation>
    <scope>NUCLEOTIDE SEQUENCE [GENOMIC DNA]</scope>
</reference>
<organism evidence="3">
    <name type="scientific">Drosophila orena</name>
    <name type="common">Fruit fly</name>
    <dbReference type="NCBI Taxonomy" id="7233"/>
    <lineage>
        <taxon>Eukaryota</taxon>
        <taxon>Metazoa</taxon>
        <taxon>Ecdysozoa</taxon>
        <taxon>Arthropoda</taxon>
        <taxon>Hexapoda</taxon>
        <taxon>Insecta</taxon>
        <taxon>Pterygota</taxon>
        <taxon>Neoptera</taxon>
        <taxon>Endopterygota</taxon>
        <taxon>Diptera</taxon>
        <taxon>Brachycera</taxon>
        <taxon>Muscomorpha</taxon>
        <taxon>Ephydroidea</taxon>
        <taxon>Drosophilidae</taxon>
        <taxon>Drosophila</taxon>
        <taxon>Sophophora</taxon>
    </lineage>
</organism>
<name>JANA_DROOR</name>
<protein>
    <recommendedName>
        <fullName>Sex-regulated protein janus-A</fullName>
    </recommendedName>
</protein>
<gene>
    <name type="primary">janA</name>
</gene>
<proteinExistence type="inferred from homology"/>
<feature type="chain" id="PRO_0000206159" description="Sex-regulated protein janus-A">
    <location>
        <begin position="1"/>
        <end position="135"/>
    </location>
</feature>
<feature type="active site" description="Proton acceptor" evidence="1">
    <location>
        <position position="63"/>
    </location>
</feature>
<feature type="binding site" evidence="1">
    <location>
        <position position="37"/>
    </location>
    <ligand>
        <name>substrate</name>
    </ligand>
</feature>
<feature type="binding site" evidence="1">
    <location>
        <begin position="104"/>
        <end position="106"/>
    </location>
    <ligand>
        <name>substrate</name>
    </ligand>
</feature>
<comment type="function">
    <text evidence="1">JanA and janB regulate somatic sex differentiation.</text>
</comment>
<comment type="similarity">
    <text evidence="2">Belongs to the janus family.</text>
</comment>
<keyword id="KW-0221">Differentiation</keyword>
<keyword id="KW-0726">Sexual differentiation</keyword>
<sequence>MNRLQLLSKGLRLIHKMSEEALAGVPLVHISPEGIFKYVMINVIDGGDASKAVIRGFADCTWHADIFDREEEVFKKLGLRAECPGGGRIEHNPDKKYLKVYGYSQGFGKADHAQTKRILATKYPDYTIETSDEGY</sequence>
<accession>Q9BM96</accession>